<accession>A7FZA9</accession>
<gene>
    <name evidence="1" type="primary">coaX</name>
    <name type="ordered locus">CLB_3597</name>
</gene>
<reference key="1">
    <citation type="journal article" date="2007" name="PLoS ONE">
        <title>Analysis of the neurotoxin complex genes in Clostridium botulinum A1-A4 and B1 strains: BoNT/A3, /Ba4 and /B1 clusters are located within plasmids.</title>
        <authorList>
            <person name="Smith T.J."/>
            <person name="Hill K.K."/>
            <person name="Foley B.T."/>
            <person name="Detter J.C."/>
            <person name="Munk A.C."/>
            <person name="Bruce D.C."/>
            <person name="Doggett N.A."/>
            <person name="Smith L.A."/>
            <person name="Marks J.D."/>
            <person name="Xie G."/>
            <person name="Brettin T.S."/>
        </authorList>
    </citation>
    <scope>NUCLEOTIDE SEQUENCE [LARGE SCALE GENOMIC DNA]</scope>
    <source>
        <strain>ATCC 19397 / Type A</strain>
    </source>
</reference>
<sequence>MILVLDVGNTNIVLGIYKNKELIANWRLATDNKRTADEYGIQVIELFSHNNLSFSDIEGVIISSVVPNIMYSLEHMISKYFNIKPIIVGPGVKTGINIKYDNPKEVGADRIVNAVAAHEIYKKPLIIIDFGTATTFCAVTKEANYLGGTICPGIKISSDALFDKAAKLPRVELVKTPGVICKNTVASIQSGIIYGYAGQVDYIVSKMKKEMMDLGEEEPFVVATGGFAKLISEESKSIDEINAILTLEGLRVIYEKNK</sequence>
<evidence type="ECO:0000255" key="1">
    <source>
        <dbReference type="HAMAP-Rule" id="MF_01274"/>
    </source>
</evidence>
<dbReference type="EC" id="2.7.1.33" evidence="1"/>
<dbReference type="EMBL" id="CP000726">
    <property type="protein sequence ID" value="ABS34005.1"/>
    <property type="molecule type" value="Genomic_DNA"/>
</dbReference>
<dbReference type="RefSeq" id="WP_003359441.1">
    <property type="nucleotide sequence ID" value="NC_009697.1"/>
</dbReference>
<dbReference type="SMR" id="A7FZA9"/>
<dbReference type="KEGG" id="cba:CLB_3597"/>
<dbReference type="HOGENOM" id="CLU_066627_1_0_9"/>
<dbReference type="UniPathway" id="UPA00241">
    <property type="reaction ID" value="UER00352"/>
</dbReference>
<dbReference type="GO" id="GO:0005737">
    <property type="term" value="C:cytoplasm"/>
    <property type="evidence" value="ECO:0007669"/>
    <property type="project" value="UniProtKB-SubCell"/>
</dbReference>
<dbReference type="GO" id="GO:0005524">
    <property type="term" value="F:ATP binding"/>
    <property type="evidence" value="ECO:0007669"/>
    <property type="project" value="UniProtKB-UniRule"/>
</dbReference>
<dbReference type="GO" id="GO:0046872">
    <property type="term" value="F:metal ion binding"/>
    <property type="evidence" value="ECO:0007669"/>
    <property type="project" value="UniProtKB-KW"/>
</dbReference>
<dbReference type="GO" id="GO:0004594">
    <property type="term" value="F:pantothenate kinase activity"/>
    <property type="evidence" value="ECO:0007669"/>
    <property type="project" value="UniProtKB-UniRule"/>
</dbReference>
<dbReference type="GO" id="GO:0015937">
    <property type="term" value="P:coenzyme A biosynthetic process"/>
    <property type="evidence" value="ECO:0007669"/>
    <property type="project" value="UniProtKB-UniRule"/>
</dbReference>
<dbReference type="CDD" id="cd24015">
    <property type="entry name" value="ASKHA_NBD_PanK-III"/>
    <property type="match status" value="1"/>
</dbReference>
<dbReference type="Gene3D" id="3.30.420.40">
    <property type="match status" value="2"/>
</dbReference>
<dbReference type="HAMAP" id="MF_01274">
    <property type="entry name" value="Pantothen_kinase_3"/>
    <property type="match status" value="1"/>
</dbReference>
<dbReference type="InterPro" id="IPR043129">
    <property type="entry name" value="ATPase_NBD"/>
</dbReference>
<dbReference type="InterPro" id="IPR004619">
    <property type="entry name" value="Type_III_PanK"/>
</dbReference>
<dbReference type="NCBIfam" id="TIGR00671">
    <property type="entry name" value="baf"/>
    <property type="match status" value="1"/>
</dbReference>
<dbReference type="NCBIfam" id="NF009847">
    <property type="entry name" value="PRK13318.1-5"/>
    <property type="match status" value="1"/>
</dbReference>
<dbReference type="NCBIfam" id="NF009848">
    <property type="entry name" value="PRK13318.1-6"/>
    <property type="match status" value="1"/>
</dbReference>
<dbReference type="NCBIfam" id="NF009855">
    <property type="entry name" value="PRK13321.1"/>
    <property type="match status" value="1"/>
</dbReference>
<dbReference type="PANTHER" id="PTHR34265">
    <property type="entry name" value="TYPE III PANTOTHENATE KINASE"/>
    <property type="match status" value="1"/>
</dbReference>
<dbReference type="PANTHER" id="PTHR34265:SF1">
    <property type="entry name" value="TYPE III PANTOTHENATE KINASE"/>
    <property type="match status" value="1"/>
</dbReference>
<dbReference type="Pfam" id="PF03309">
    <property type="entry name" value="Pan_kinase"/>
    <property type="match status" value="1"/>
</dbReference>
<dbReference type="SUPFAM" id="SSF53067">
    <property type="entry name" value="Actin-like ATPase domain"/>
    <property type="match status" value="2"/>
</dbReference>
<organism>
    <name type="scientific">Clostridium botulinum (strain ATCC 19397 / Type A)</name>
    <dbReference type="NCBI Taxonomy" id="441770"/>
    <lineage>
        <taxon>Bacteria</taxon>
        <taxon>Bacillati</taxon>
        <taxon>Bacillota</taxon>
        <taxon>Clostridia</taxon>
        <taxon>Eubacteriales</taxon>
        <taxon>Clostridiaceae</taxon>
        <taxon>Clostridium</taxon>
    </lineage>
</organism>
<protein>
    <recommendedName>
        <fullName evidence="1">Type III pantothenate kinase</fullName>
        <ecNumber evidence="1">2.7.1.33</ecNumber>
    </recommendedName>
    <alternativeName>
        <fullName evidence="1">PanK-III</fullName>
    </alternativeName>
    <alternativeName>
        <fullName evidence="1">Pantothenic acid kinase</fullName>
    </alternativeName>
</protein>
<comment type="function">
    <text evidence="1">Catalyzes the phosphorylation of pantothenate (Pan), the first step in CoA biosynthesis.</text>
</comment>
<comment type="catalytic activity">
    <reaction evidence="1">
        <text>(R)-pantothenate + ATP = (R)-4'-phosphopantothenate + ADP + H(+)</text>
        <dbReference type="Rhea" id="RHEA:16373"/>
        <dbReference type="ChEBI" id="CHEBI:10986"/>
        <dbReference type="ChEBI" id="CHEBI:15378"/>
        <dbReference type="ChEBI" id="CHEBI:29032"/>
        <dbReference type="ChEBI" id="CHEBI:30616"/>
        <dbReference type="ChEBI" id="CHEBI:456216"/>
        <dbReference type="EC" id="2.7.1.33"/>
    </reaction>
</comment>
<comment type="cofactor">
    <cofactor evidence="1">
        <name>NH4(+)</name>
        <dbReference type="ChEBI" id="CHEBI:28938"/>
    </cofactor>
    <cofactor evidence="1">
        <name>K(+)</name>
        <dbReference type="ChEBI" id="CHEBI:29103"/>
    </cofactor>
    <text evidence="1">A monovalent cation. Ammonium or potassium.</text>
</comment>
<comment type="pathway">
    <text evidence="1">Cofactor biosynthesis; coenzyme A biosynthesis; CoA from (R)-pantothenate: step 1/5.</text>
</comment>
<comment type="subunit">
    <text evidence="1">Homodimer.</text>
</comment>
<comment type="subcellular location">
    <subcellularLocation>
        <location evidence="1">Cytoplasm</location>
    </subcellularLocation>
</comment>
<comment type="similarity">
    <text evidence="1">Belongs to the type III pantothenate kinase family.</text>
</comment>
<feature type="chain" id="PRO_1000054369" description="Type III pantothenate kinase">
    <location>
        <begin position="1"/>
        <end position="258"/>
    </location>
</feature>
<feature type="active site" description="Proton acceptor" evidence="1">
    <location>
        <position position="109"/>
    </location>
</feature>
<feature type="binding site" evidence="1">
    <location>
        <begin position="6"/>
        <end position="13"/>
    </location>
    <ligand>
        <name>ATP</name>
        <dbReference type="ChEBI" id="CHEBI:30616"/>
    </ligand>
</feature>
<feature type="binding site" evidence="1">
    <location>
        <position position="100"/>
    </location>
    <ligand>
        <name>substrate</name>
    </ligand>
</feature>
<feature type="binding site" evidence="1">
    <location>
        <begin position="107"/>
        <end position="110"/>
    </location>
    <ligand>
        <name>substrate</name>
    </ligand>
</feature>
<feature type="binding site" evidence="1">
    <location>
        <position position="129"/>
    </location>
    <ligand>
        <name>K(+)</name>
        <dbReference type="ChEBI" id="CHEBI:29103"/>
    </ligand>
</feature>
<feature type="binding site" evidence="1">
    <location>
        <position position="132"/>
    </location>
    <ligand>
        <name>ATP</name>
        <dbReference type="ChEBI" id="CHEBI:30616"/>
    </ligand>
</feature>
<feature type="binding site" evidence="1">
    <location>
        <position position="184"/>
    </location>
    <ligand>
        <name>substrate</name>
    </ligand>
</feature>
<name>COAX_CLOB1</name>
<keyword id="KW-0067">ATP-binding</keyword>
<keyword id="KW-0173">Coenzyme A biosynthesis</keyword>
<keyword id="KW-0963">Cytoplasm</keyword>
<keyword id="KW-0418">Kinase</keyword>
<keyword id="KW-0479">Metal-binding</keyword>
<keyword id="KW-0547">Nucleotide-binding</keyword>
<keyword id="KW-0630">Potassium</keyword>
<keyword id="KW-0808">Transferase</keyword>
<proteinExistence type="inferred from homology"/>